<proteinExistence type="inferred from homology"/>
<accession>Q55FI7</accession>
<protein>
    <recommendedName>
        <fullName>Zinc finger SWIM domain-containing protein 7 homolog</fullName>
    </recommendedName>
</protein>
<gene>
    <name type="primary">zswim7</name>
    <name type="ORF">DDB_G0268092</name>
</gene>
<sequence length="156" mass="18004">MATTINTSNKNTVKLLDILKIIFENNKTNTISEETLLSLYYIFDQTIFASLELIDKELITKYVFQPSNRYFYVVEGRKGAKYMCLIQGDYCSCPSFNFSVLLKSDSVYCKHQISSILAEIISNVKVIEFDDSEYQSQILSIESLSFKTPTHKFQQK</sequence>
<keyword id="KW-0227">DNA damage</keyword>
<keyword id="KW-0233">DNA recombination</keyword>
<keyword id="KW-0234">DNA repair</keyword>
<keyword id="KW-0479">Metal-binding</keyword>
<keyword id="KW-0539">Nucleus</keyword>
<keyword id="KW-1185">Reference proteome</keyword>
<keyword id="KW-0862">Zinc</keyword>
<keyword id="KW-0863">Zinc-finger</keyword>
<comment type="function">
    <text evidence="1">May be involved in the homologous recombination repair (HRR) pathway of double-stranded DNA breaks arising during DNA replication or induced by DNA-damaging agents.</text>
</comment>
<comment type="subcellular location">
    <subcellularLocation>
        <location evidence="1">Nucleus</location>
    </subcellularLocation>
</comment>
<comment type="similarity">
    <text evidence="3">Belongs to the SWS1 family.</text>
</comment>
<dbReference type="EMBL" id="AAFI02000003">
    <property type="protein sequence ID" value="EAL73499.1"/>
    <property type="molecule type" value="Genomic_DNA"/>
</dbReference>
<dbReference type="RefSeq" id="XP_647546.1">
    <property type="nucleotide sequence ID" value="XM_642454.1"/>
</dbReference>
<dbReference type="STRING" id="44689.Q55FI7"/>
<dbReference type="PaxDb" id="44689-DDB0305288"/>
<dbReference type="EnsemblProtists" id="EAL73499">
    <property type="protein sequence ID" value="EAL73499"/>
    <property type="gene ID" value="DDB_G0268092"/>
</dbReference>
<dbReference type="GeneID" id="8616353"/>
<dbReference type="KEGG" id="ddi:DDB_G0268092"/>
<dbReference type="dictyBase" id="DDB_G0268092"/>
<dbReference type="VEuPathDB" id="AmoebaDB:DDB_G0268092"/>
<dbReference type="eggNOG" id="ENOG502RSRF">
    <property type="taxonomic scope" value="Eukaryota"/>
</dbReference>
<dbReference type="HOGENOM" id="CLU_132858_2_0_1"/>
<dbReference type="InParanoid" id="Q55FI7"/>
<dbReference type="OMA" id="YTCYTSC"/>
<dbReference type="PhylomeDB" id="Q55FI7"/>
<dbReference type="PRO" id="PR:Q55FI7"/>
<dbReference type="Proteomes" id="UP000002195">
    <property type="component" value="Chromosome 1"/>
</dbReference>
<dbReference type="GO" id="GO:0005634">
    <property type="term" value="C:nucleus"/>
    <property type="evidence" value="ECO:0007669"/>
    <property type="project" value="UniProtKB-SubCell"/>
</dbReference>
<dbReference type="GO" id="GO:0097196">
    <property type="term" value="C:Shu complex"/>
    <property type="evidence" value="ECO:0000318"/>
    <property type="project" value="GO_Central"/>
</dbReference>
<dbReference type="GO" id="GO:0008270">
    <property type="term" value="F:zinc ion binding"/>
    <property type="evidence" value="ECO:0007669"/>
    <property type="project" value="UniProtKB-KW"/>
</dbReference>
<dbReference type="GO" id="GO:0000724">
    <property type="term" value="P:double-strand break repair via homologous recombination"/>
    <property type="evidence" value="ECO:0000250"/>
    <property type="project" value="UniProtKB"/>
</dbReference>
<dbReference type="InterPro" id="IPR007527">
    <property type="entry name" value="Znf_SWIM"/>
</dbReference>
<dbReference type="PANTHER" id="PTHR28498">
    <property type="entry name" value="ZINC FINGER SWIM DOMAIN-CONTAINING PROTEIN 7"/>
    <property type="match status" value="1"/>
</dbReference>
<dbReference type="PANTHER" id="PTHR28498:SF1">
    <property type="entry name" value="ZINC FINGER SWIM DOMAIN-CONTAINING PROTEIN 7"/>
    <property type="match status" value="1"/>
</dbReference>
<dbReference type="PROSITE" id="PS50966">
    <property type="entry name" value="ZF_SWIM"/>
    <property type="match status" value="1"/>
</dbReference>
<organism>
    <name type="scientific">Dictyostelium discoideum</name>
    <name type="common">Social amoeba</name>
    <dbReference type="NCBI Taxonomy" id="44689"/>
    <lineage>
        <taxon>Eukaryota</taxon>
        <taxon>Amoebozoa</taxon>
        <taxon>Evosea</taxon>
        <taxon>Eumycetozoa</taxon>
        <taxon>Dictyostelia</taxon>
        <taxon>Dictyosteliales</taxon>
        <taxon>Dictyosteliaceae</taxon>
        <taxon>Dictyostelium</taxon>
    </lineage>
</organism>
<name>ZSWM7_DICDI</name>
<feature type="chain" id="PRO_0000331386" description="Zinc finger SWIM domain-containing protein 7 homolog">
    <location>
        <begin position="1"/>
        <end position="156"/>
    </location>
</feature>
<feature type="zinc finger region" description="SWIM-type" evidence="2">
    <location>
        <begin position="82"/>
        <end position="120"/>
    </location>
</feature>
<evidence type="ECO:0000250" key="1"/>
<evidence type="ECO:0000255" key="2">
    <source>
        <dbReference type="PROSITE-ProRule" id="PRU00325"/>
    </source>
</evidence>
<evidence type="ECO:0000305" key="3"/>
<reference key="1">
    <citation type="journal article" date="2005" name="Nature">
        <title>The genome of the social amoeba Dictyostelium discoideum.</title>
        <authorList>
            <person name="Eichinger L."/>
            <person name="Pachebat J.A."/>
            <person name="Gloeckner G."/>
            <person name="Rajandream M.A."/>
            <person name="Sucgang R."/>
            <person name="Berriman M."/>
            <person name="Song J."/>
            <person name="Olsen R."/>
            <person name="Szafranski K."/>
            <person name="Xu Q."/>
            <person name="Tunggal B."/>
            <person name="Kummerfeld S."/>
            <person name="Madera M."/>
            <person name="Konfortov B.A."/>
            <person name="Rivero F."/>
            <person name="Bankier A.T."/>
            <person name="Lehmann R."/>
            <person name="Hamlin N."/>
            <person name="Davies R."/>
            <person name="Gaudet P."/>
            <person name="Fey P."/>
            <person name="Pilcher K."/>
            <person name="Chen G."/>
            <person name="Saunders D."/>
            <person name="Sodergren E.J."/>
            <person name="Davis P."/>
            <person name="Kerhornou A."/>
            <person name="Nie X."/>
            <person name="Hall N."/>
            <person name="Anjard C."/>
            <person name="Hemphill L."/>
            <person name="Bason N."/>
            <person name="Farbrother P."/>
            <person name="Desany B."/>
            <person name="Just E."/>
            <person name="Morio T."/>
            <person name="Rost R."/>
            <person name="Churcher C.M."/>
            <person name="Cooper J."/>
            <person name="Haydock S."/>
            <person name="van Driessche N."/>
            <person name="Cronin A."/>
            <person name="Goodhead I."/>
            <person name="Muzny D.M."/>
            <person name="Mourier T."/>
            <person name="Pain A."/>
            <person name="Lu M."/>
            <person name="Harper D."/>
            <person name="Lindsay R."/>
            <person name="Hauser H."/>
            <person name="James K.D."/>
            <person name="Quiles M."/>
            <person name="Madan Babu M."/>
            <person name="Saito T."/>
            <person name="Buchrieser C."/>
            <person name="Wardroper A."/>
            <person name="Felder M."/>
            <person name="Thangavelu M."/>
            <person name="Johnson D."/>
            <person name="Knights A."/>
            <person name="Loulseged H."/>
            <person name="Mungall K.L."/>
            <person name="Oliver K."/>
            <person name="Price C."/>
            <person name="Quail M.A."/>
            <person name="Urushihara H."/>
            <person name="Hernandez J."/>
            <person name="Rabbinowitsch E."/>
            <person name="Steffen D."/>
            <person name="Sanders M."/>
            <person name="Ma J."/>
            <person name="Kohara Y."/>
            <person name="Sharp S."/>
            <person name="Simmonds M.N."/>
            <person name="Spiegler S."/>
            <person name="Tivey A."/>
            <person name="Sugano S."/>
            <person name="White B."/>
            <person name="Walker D."/>
            <person name="Woodward J.R."/>
            <person name="Winckler T."/>
            <person name="Tanaka Y."/>
            <person name="Shaulsky G."/>
            <person name="Schleicher M."/>
            <person name="Weinstock G.M."/>
            <person name="Rosenthal A."/>
            <person name="Cox E.C."/>
            <person name="Chisholm R.L."/>
            <person name="Gibbs R.A."/>
            <person name="Loomis W.F."/>
            <person name="Platzer M."/>
            <person name="Kay R.R."/>
            <person name="Williams J.G."/>
            <person name="Dear P.H."/>
            <person name="Noegel A.A."/>
            <person name="Barrell B.G."/>
            <person name="Kuspa A."/>
        </authorList>
    </citation>
    <scope>NUCLEOTIDE SEQUENCE [LARGE SCALE GENOMIC DNA]</scope>
    <source>
        <strain>AX4</strain>
    </source>
</reference>